<name>UNG_PSYIN</name>
<accession>A1SUE5</accession>
<feature type="chain" id="PRO_1000009933" description="Uracil-DNA glycosylase">
    <location>
        <begin position="1"/>
        <end position="216"/>
    </location>
</feature>
<feature type="active site" description="Proton acceptor" evidence="1">
    <location>
        <position position="60"/>
    </location>
</feature>
<keyword id="KW-0963">Cytoplasm</keyword>
<keyword id="KW-0227">DNA damage</keyword>
<keyword id="KW-0234">DNA repair</keyword>
<keyword id="KW-0378">Hydrolase</keyword>
<keyword id="KW-1185">Reference proteome</keyword>
<comment type="function">
    <text evidence="1">Excises uracil residues from the DNA which can arise as a result of misincorporation of dUMP residues by DNA polymerase or due to deamination of cytosine.</text>
</comment>
<comment type="catalytic activity">
    <reaction evidence="1">
        <text>Hydrolyzes single-stranded DNA or mismatched double-stranded DNA and polynucleotides, releasing free uracil.</text>
        <dbReference type="EC" id="3.2.2.27"/>
    </reaction>
</comment>
<comment type="subcellular location">
    <subcellularLocation>
        <location evidence="1">Cytoplasm</location>
    </subcellularLocation>
</comment>
<comment type="similarity">
    <text evidence="1">Belongs to the uracil-DNA glycosylase (UDG) superfamily. UNG family.</text>
</comment>
<reference key="1">
    <citation type="journal article" date="2008" name="BMC Genomics">
        <title>Genomics of an extreme psychrophile, Psychromonas ingrahamii.</title>
        <authorList>
            <person name="Riley M."/>
            <person name="Staley J.T."/>
            <person name="Danchin A."/>
            <person name="Wang T.Z."/>
            <person name="Brettin T.S."/>
            <person name="Hauser L.J."/>
            <person name="Land M.L."/>
            <person name="Thompson L.S."/>
        </authorList>
    </citation>
    <scope>NUCLEOTIDE SEQUENCE [LARGE SCALE GENOMIC DNA]</scope>
    <source>
        <strain>DSM 17664 / CCUG 51855 / 37</strain>
    </source>
</reference>
<protein>
    <recommendedName>
        <fullName evidence="1">Uracil-DNA glycosylase</fullName>
        <shortName evidence="1">UDG</shortName>
        <ecNumber evidence="1">3.2.2.27</ecNumber>
    </recommendedName>
</protein>
<evidence type="ECO:0000255" key="1">
    <source>
        <dbReference type="HAMAP-Rule" id="MF_00148"/>
    </source>
</evidence>
<proteinExistence type="inferred from homology"/>
<sequence length="216" mass="24435">MSWKKFITQQESMEYYNALQAFLKSQKELGKNIYPPEHLVFNAFNLTPLENIKVVILGQDPYHREGQSHGLSFSVPEGIKIPPSLRNIYKELSTSIEGYKIPESGNLAHWAKQGILLLNSVLTVEQADPGCHAKKGWETFTDNAISEINNARSGVIFLLWGSYAHKKGSLIDKNKHTVLTSTHPSPLSAYRGFLGCKHFSQVNDILAERREQLIIW</sequence>
<dbReference type="EC" id="3.2.2.27" evidence="1"/>
<dbReference type="EMBL" id="CP000510">
    <property type="protein sequence ID" value="ABM03110.1"/>
    <property type="molecule type" value="Genomic_DNA"/>
</dbReference>
<dbReference type="RefSeq" id="WP_011769673.1">
    <property type="nucleotide sequence ID" value="NC_008709.1"/>
</dbReference>
<dbReference type="SMR" id="A1SUE5"/>
<dbReference type="STRING" id="357804.Ping_1283"/>
<dbReference type="KEGG" id="pin:Ping_1283"/>
<dbReference type="eggNOG" id="COG0692">
    <property type="taxonomic scope" value="Bacteria"/>
</dbReference>
<dbReference type="HOGENOM" id="CLU_032162_3_0_6"/>
<dbReference type="OrthoDB" id="9804372at2"/>
<dbReference type="Proteomes" id="UP000000639">
    <property type="component" value="Chromosome"/>
</dbReference>
<dbReference type="GO" id="GO:0005737">
    <property type="term" value="C:cytoplasm"/>
    <property type="evidence" value="ECO:0007669"/>
    <property type="project" value="UniProtKB-SubCell"/>
</dbReference>
<dbReference type="GO" id="GO:0004844">
    <property type="term" value="F:uracil DNA N-glycosylase activity"/>
    <property type="evidence" value="ECO:0007669"/>
    <property type="project" value="UniProtKB-UniRule"/>
</dbReference>
<dbReference type="GO" id="GO:0097510">
    <property type="term" value="P:base-excision repair, AP site formation via deaminated base removal"/>
    <property type="evidence" value="ECO:0007669"/>
    <property type="project" value="TreeGrafter"/>
</dbReference>
<dbReference type="CDD" id="cd10027">
    <property type="entry name" value="UDG-F1-like"/>
    <property type="match status" value="1"/>
</dbReference>
<dbReference type="FunFam" id="3.40.470.10:FF:000001">
    <property type="entry name" value="Uracil-DNA glycosylase"/>
    <property type="match status" value="1"/>
</dbReference>
<dbReference type="Gene3D" id="3.40.470.10">
    <property type="entry name" value="Uracil-DNA glycosylase-like domain"/>
    <property type="match status" value="1"/>
</dbReference>
<dbReference type="HAMAP" id="MF_00148">
    <property type="entry name" value="UDG"/>
    <property type="match status" value="1"/>
</dbReference>
<dbReference type="InterPro" id="IPR002043">
    <property type="entry name" value="UDG_fam1"/>
</dbReference>
<dbReference type="InterPro" id="IPR018085">
    <property type="entry name" value="Ura-DNA_Glyclase_AS"/>
</dbReference>
<dbReference type="InterPro" id="IPR005122">
    <property type="entry name" value="Uracil-DNA_glycosylase-like"/>
</dbReference>
<dbReference type="InterPro" id="IPR036895">
    <property type="entry name" value="Uracil-DNA_glycosylase-like_sf"/>
</dbReference>
<dbReference type="NCBIfam" id="NF003588">
    <property type="entry name" value="PRK05254.1-1"/>
    <property type="match status" value="1"/>
</dbReference>
<dbReference type="NCBIfam" id="NF003589">
    <property type="entry name" value="PRK05254.1-2"/>
    <property type="match status" value="1"/>
</dbReference>
<dbReference type="NCBIfam" id="NF003591">
    <property type="entry name" value="PRK05254.1-4"/>
    <property type="match status" value="1"/>
</dbReference>
<dbReference type="NCBIfam" id="NF003592">
    <property type="entry name" value="PRK05254.1-5"/>
    <property type="match status" value="1"/>
</dbReference>
<dbReference type="NCBIfam" id="TIGR00628">
    <property type="entry name" value="ung"/>
    <property type="match status" value="1"/>
</dbReference>
<dbReference type="PANTHER" id="PTHR11264">
    <property type="entry name" value="URACIL-DNA GLYCOSYLASE"/>
    <property type="match status" value="1"/>
</dbReference>
<dbReference type="PANTHER" id="PTHR11264:SF0">
    <property type="entry name" value="URACIL-DNA GLYCOSYLASE"/>
    <property type="match status" value="1"/>
</dbReference>
<dbReference type="Pfam" id="PF03167">
    <property type="entry name" value="UDG"/>
    <property type="match status" value="1"/>
</dbReference>
<dbReference type="SMART" id="SM00986">
    <property type="entry name" value="UDG"/>
    <property type="match status" value="1"/>
</dbReference>
<dbReference type="SMART" id="SM00987">
    <property type="entry name" value="UreE_C"/>
    <property type="match status" value="1"/>
</dbReference>
<dbReference type="SUPFAM" id="SSF52141">
    <property type="entry name" value="Uracil-DNA glycosylase-like"/>
    <property type="match status" value="1"/>
</dbReference>
<dbReference type="PROSITE" id="PS00130">
    <property type="entry name" value="U_DNA_GLYCOSYLASE"/>
    <property type="match status" value="1"/>
</dbReference>
<gene>
    <name evidence="1" type="primary">ung</name>
    <name type="ordered locus">Ping_1283</name>
</gene>
<organism>
    <name type="scientific">Psychromonas ingrahamii (strain DSM 17664 / CCUG 51855 / 37)</name>
    <dbReference type="NCBI Taxonomy" id="357804"/>
    <lineage>
        <taxon>Bacteria</taxon>
        <taxon>Pseudomonadati</taxon>
        <taxon>Pseudomonadota</taxon>
        <taxon>Gammaproteobacteria</taxon>
        <taxon>Alteromonadales</taxon>
        <taxon>Psychromonadaceae</taxon>
        <taxon>Psychromonas</taxon>
    </lineage>
</organism>